<organism>
    <name type="scientific">Actinobacillus pleuropneumoniae serotype 7 (strain AP76)</name>
    <dbReference type="NCBI Taxonomy" id="537457"/>
    <lineage>
        <taxon>Bacteria</taxon>
        <taxon>Pseudomonadati</taxon>
        <taxon>Pseudomonadota</taxon>
        <taxon>Gammaproteobacteria</taxon>
        <taxon>Pasteurellales</taxon>
        <taxon>Pasteurellaceae</taxon>
        <taxon>Actinobacillus</taxon>
    </lineage>
</organism>
<feature type="chain" id="PRO_1000099926" description="Pantothenate kinase">
    <location>
        <begin position="1"/>
        <end position="316"/>
    </location>
</feature>
<feature type="binding site" evidence="1">
    <location>
        <begin position="95"/>
        <end position="102"/>
    </location>
    <ligand>
        <name>ATP</name>
        <dbReference type="ChEBI" id="CHEBI:30616"/>
    </ligand>
</feature>
<dbReference type="EC" id="2.7.1.33" evidence="1"/>
<dbReference type="EMBL" id="CP001091">
    <property type="protein sequence ID" value="ACE62225.1"/>
    <property type="molecule type" value="Genomic_DNA"/>
</dbReference>
<dbReference type="RefSeq" id="WP_005608808.1">
    <property type="nucleotide sequence ID" value="NC_010939.1"/>
</dbReference>
<dbReference type="SMR" id="B3GYJ4"/>
<dbReference type="KEGG" id="apa:APP7_1573"/>
<dbReference type="HOGENOM" id="CLU_053818_1_1_6"/>
<dbReference type="UniPathway" id="UPA00241">
    <property type="reaction ID" value="UER00352"/>
</dbReference>
<dbReference type="Proteomes" id="UP000001226">
    <property type="component" value="Chromosome"/>
</dbReference>
<dbReference type="GO" id="GO:0005737">
    <property type="term" value="C:cytoplasm"/>
    <property type="evidence" value="ECO:0007669"/>
    <property type="project" value="UniProtKB-SubCell"/>
</dbReference>
<dbReference type="GO" id="GO:0005524">
    <property type="term" value="F:ATP binding"/>
    <property type="evidence" value="ECO:0007669"/>
    <property type="project" value="UniProtKB-UniRule"/>
</dbReference>
<dbReference type="GO" id="GO:0004594">
    <property type="term" value="F:pantothenate kinase activity"/>
    <property type="evidence" value="ECO:0007669"/>
    <property type="project" value="UniProtKB-UniRule"/>
</dbReference>
<dbReference type="GO" id="GO:0015937">
    <property type="term" value="P:coenzyme A biosynthetic process"/>
    <property type="evidence" value="ECO:0007669"/>
    <property type="project" value="UniProtKB-UniRule"/>
</dbReference>
<dbReference type="CDD" id="cd02025">
    <property type="entry name" value="PanK"/>
    <property type="match status" value="1"/>
</dbReference>
<dbReference type="FunFam" id="3.40.50.300:FF:000242">
    <property type="entry name" value="Pantothenate kinase"/>
    <property type="match status" value="1"/>
</dbReference>
<dbReference type="Gene3D" id="3.40.50.300">
    <property type="entry name" value="P-loop containing nucleotide triphosphate hydrolases"/>
    <property type="match status" value="1"/>
</dbReference>
<dbReference type="HAMAP" id="MF_00215">
    <property type="entry name" value="Pantothen_kinase_1"/>
    <property type="match status" value="1"/>
</dbReference>
<dbReference type="InterPro" id="IPR027417">
    <property type="entry name" value="P-loop_NTPase"/>
</dbReference>
<dbReference type="InterPro" id="IPR004566">
    <property type="entry name" value="PanK"/>
</dbReference>
<dbReference type="InterPro" id="IPR006083">
    <property type="entry name" value="PRK/URK"/>
</dbReference>
<dbReference type="NCBIfam" id="TIGR00554">
    <property type="entry name" value="panK_bact"/>
    <property type="match status" value="1"/>
</dbReference>
<dbReference type="PANTHER" id="PTHR10285">
    <property type="entry name" value="URIDINE KINASE"/>
    <property type="match status" value="1"/>
</dbReference>
<dbReference type="Pfam" id="PF00485">
    <property type="entry name" value="PRK"/>
    <property type="match status" value="1"/>
</dbReference>
<dbReference type="PIRSF" id="PIRSF000545">
    <property type="entry name" value="Pantothenate_kin"/>
    <property type="match status" value="1"/>
</dbReference>
<dbReference type="SUPFAM" id="SSF52540">
    <property type="entry name" value="P-loop containing nucleoside triphosphate hydrolases"/>
    <property type="match status" value="1"/>
</dbReference>
<name>COAA_ACTP7</name>
<gene>
    <name evidence="1" type="primary">coaA</name>
    <name type="ordered locus">APP7_1573</name>
</gene>
<comment type="catalytic activity">
    <reaction evidence="1">
        <text>(R)-pantothenate + ATP = (R)-4'-phosphopantothenate + ADP + H(+)</text>
        <dbReference type="Rhea" id="RHEA:16373"/>
        <dbReference type="ChEBI" id="CHEBI:10986"/>
        <dbReference type="ChEBI" id="CHEBI:15378"/>
        <dbReference type="ChEBI" id="CHEBI:29032"/>
        <dbReference type="ChEBI" id="CHEBI:30616"/>
        <dbReference type="ChEBI" id="CHEBI:456216"/>
        <dbReference type="EC" id="2.7.1.33"/>
    </reaction>
</comment>
<comment type="pathway">
    <text evidence="1">Cofactor biosynthesis; coenzyme A biosynthesis; CoA from (R)-pantothenate: step 1/5.</text>
</comment>
<comment type="subcellular location">
    <subcellularLocation>
        <location evidence="1">Cytoplasm</location>
    </subcellularLocation>
</comment>
<comment type="similarity">
    <text evidence="1">Belongs to the prokaryotic pantothenate kinase family.</text>
</comment>
<sequence>MSLQKSNKITPFLTFDRQKWAELRKSVPLKLTEQDLKPLLGFNEDLSLDEVSTIYLPLARLINYYIEENLKRQTVLHRFLDVASPKVPYIISIAGSVSVGKSTSARILQALLSQWPSERKVDLITTDGFLYPLTTLQEKDLLKRKGFPESYDIHRLIQFVSDIKSGKRHIQAPIYSHLTYDIIPDQYNVVDQPDIVILEGLNVLQSGMNYPSSPHNVFVSDFVDFSIYVDADEDLLKEWYIARFLKFRRSAFSDPNAYFHHYSKLSEQEAIRTASSIWDEINGLNLKQNILPSRERANLILIKGEDHAIQTVKLRK</sequence>
<accession>B3GYJ4</accession>
<keyword id="KW-0067">ATP-binding</keyword>
<keyword id="KW-0173">Coenzyme A biosynthesis</keyword>
<keyword id="KW-0963">Cytoplasm</keyword>
<keyword id="KW-0418">Kinase</keyword>
<keyword id="KW-0547">Nucleotide-binding</keyword>
<keyword id="KW-0808">Transferase</keyword>
<reference key="1">
    <citation type="submission" date="2008-06" db="EMBL/GenBank/DDBJ databases">
        <title>Genome and proteome analysis of A. pleuropneumoniae serotype 7.</title>
        <authorList>
            <person name="Linke B."/>
            <person name="Buettner F."/>
            <person name="Martinez-Arias R."/>
            <person name="Goesmann A."/>
            <person name="Baltes N."/>
            <person name="Tegetmeyer H."/>
            <person name="Singh M."/>
            <person name="Gerlach G.F."/>
        </authorList>
    </citation>
    <scope>NUCLEOTIDE SEQUENCE [LARGE SCALE GENOMIC DNA]</scope>
    <source>
        <strain>AP76</strain>
    </source>
</reference>
<protein>
    <recommendedName>
        <fullName evidence="1">Pantothenate kinase</fullName>
        <ecNumber evidence="1">2.7.1.33</ecNumber>
    </recommendedName>
    <alternativeName>
        <fullName evidence="1">Pantothenic acid kinase</fullName>
    </alternativeName>
</protein>
<proteinExistence type="inferred from homology"/>
<evidence type="ECO:0000255" key="1">
    <source>
        <dbReference type="HAMAP-Rule" id="MF_00215"/>
    </source>
</evidence>